<organism>
    <name type="scientific">Acinetobacter calcoaceticus</name>
    <dbReference type="NCBI Taxonomy" id="471"/>
    <lineage>
        <taxon>Bacteria</taxon>
        <taxon>Pseudomonadati</taxon>
        <taxon>Pseudomonadota</taxon>
        <taxon>Gammaproteobacteria</taxon>
        <taxon>Moraxellales</taxon>
        <taxon>Moraxellaceae</taxon>
        <taxon>Acinetobacter</taxon>
        <taxon>Acinetobacter calcoaceticus/baumannii complex</taxon>
    </lineage>
</organism>
<gene>
    <name type="primary">htpG</name>
</gene>
<protein>
    <recommendedName>
        <fullName>Chaperone protein HtpG</fullName>
    </recommendedName>
    <alternativeName>
        <fullName>Heat shock protein HtpG</fullName>
    </alternativeName>
    <alternativeName>
        <fullName>High temperature protein G</fullName>
    </alternativeName>
</protein>
<dbReference type="GO" id="GO:0005737">
    <property type="term" value="C:cytoplasm"/>
    <property type="evidence" value="ECO:0007669"/>
    <property type="project" value="UniProtKB-SubCell"/>
</dbReference>
<dbReference type="GO" id="GO:0005524">
    <property type="term" value="F:ATP binding"/>
    <property type="evidence" value="ECO:0007669"/>
    <property type="project" value="UniProtKB-KW"/>
</dbReference>
<keyword id="KW-0067">ATP-binding</keyword>
<keyword id="KW-0143">Chaperone</keyword>
<keyword id="KW-0963">Cytoplasm</keyword>
<keyword id="KW-0903">Direct protein sequencing</keyword>
<keyword id="KW-0547">Nucleotide-binding</keyword>
<keyword id="KW-0346">Stress response</keyword>
<accession>P81876</accession>
<name>HTPG_ACICA</name>
<evidence type="ECO:0000250" key="1"/>
<evidence type="ECO:0000305" key="2"/>
<feature type="chain" id="PRO_0000062964" description="Chaperone protein HtpG">
    <location>
        <begin position="1"/>
        <end position="16" status="greater than"/>
    </location>
</feature>
<feature type="non-terminal residue">
    <location>
        <position position="16"/>
    </location>
</feature>
<comment type="function">
    <text evidence="1">Molecular chaperone. Has ATPase activity (By similarity).</text>
</comment>
<comment type="subunit">
    <text evidence="1">Homodimer.</text>
</comment>
<comment type="subcellular location">
    <subcellularLocation>
        <location evidence="1">Cytoplasm</location>
    </subcellularLocation>
</comment>
<comment type="induction">
    <text>By heat shock and primary alcohols.</text>
</comment>
<comment type="similarity">
    <text evidence="2">Belongs to the heat shock protein 90 family.</text>
</comment>
<sequence length="16" mass="1770">SEXASQNYSFQAEVAQ</sequence>
<reference key="1">
    <citation type="journal article" date="1999" name="Electrophoresis">
        <title>Induction of heat shock proteins in response to primary alcohols in Acinetobacter calcoaceticus.</title>
        <authorList>
            <person name="Benndorf D."/>
            <person name="Loffhagen N."/>
            <person name="Babel W."/>
        </authorList>
    </citation>
    <scope>PROTEIN SEQUENCE</scope>
    <source>
        <strain>69-V</strain>
    </source>
</reference>
<proteinExistence type="evidence at protein level"/>